<dbReference type="EC" id="3.1.1.-"/>
<dbReference type="EMBL" id="AC002392">
    <property type="protein sequence ID" value="AAD12024.1"/>
    <property type="molecule type" value="Genomic_DNA"/>
</dbReference>
<dbReference type="EMBL" id="CP002685">
    <property type="protein sequence ID" value="AEC06844.1"/>
    <property type="molecule type" value="Genomic_DNA"/>
</dbReference>
<dbReference type="EMBL" id="BX820375">
    <property type="status" value="NOT_ANNOTATED_CDS"/>
    <property type="molecule type" value="mRNA"/>
</dbReference>
<dbReference type="PIR" id="T00526">
    <property type="entry name" value="T00526"/>
</dbReference>
<dbReference type="RefSeq" id="NP_179496.1">
    <property type="nucleotide sequence ID" value="NM_127463.3"/>
</dbReference>
<dbReference type="SMR" id="O64469"/>
<dbReference type="FunCoup" id="O64469">
    <property type="interactions" value="132"/>
</dbReference>
<dbReference type="STRING" id="3702.O64469"/>
<dbReference type="GlyGen" id="O64469">
    <property type="glycosylation" value="1 site"/>
</dbReference>
<dbReference type="iPTMnet" id="O64469"/>
<dbReference type="PaxDb" id="3702-AT2G19060.1"/>
<dbReference type="ProteomicsDB" id="221974"/>
<dbReference type="EnsemblPlants" id="AT2G19060.1">
    <property type="protein sequence ID" value="AT2G19060.1"/>
    <property type="gene ID" value="AT2G19060"/>
</dbReference>
<dbReference type="GeneID" id="816423"/>
<dbReference type="Gramene" id="AT2G19060.1">
    <property type="protein sequence ID" value="AT2G19060.1"/>
    <property type="gene ID" value="AT2G19060"/>
</dbReference>
<dbReference type="KEGG" id="ath:AT2G19060"/>
<dbReference type="Araport" id="AT2G19060"/>
<dbReference type="TAIR" id="AT2G19060"/>
<dbReference type="HOGENOM" id="CLU_015101_0_0_1"/>
<dbReference type="InParanoid" id="O64469"/>
<dbReference type="OMA" id="CLYTVDM"/>
<dbReference type="OrthoDB" id="1600564at2759"/>
<dbReference type="PhylomeDB" id="O64469"/>
<dbReference type="BioCyc" id="ARA:AT2G19060-MONOMER"/>
<dbReference type="PRO" id="PR:O64469"/>
<dbReference type="Proteomes" id="UP000006548">
    <property type="component" value="Chromosome 2"/>
</dbReference>
<dbReference type="ExpressionAtlas" id="O64469">
    <property type="expression patterns" value="baseline and differential"/>
</dbReference>
<dbReference type="GO" id="GO:0005576">
    <property type="term" value="C:extracellular region"/>
    <property type="evidence" value="ECO:0007669"/>
    <property type="project" value="UniProtKB-SubCell"/>
</dbReference>
<dbReference type="GO" id="GO:0016788">
    <property type="term" value="F:hydrolase activity, acting on ester bonds"/>
    <property type="evidence" value="ECO:0007669"/>
    <property type="project" value="InterPro"/>
</dbReference>
<dbReference type="GO" id="GO:0016042">
    <property type="term" value="P:lipid catabolic process"/>
    <property type="evidence" value="ECO:0007669"/>
    <property type="project" value="UniProtKB-KW"/>
</dbReference>
<dbReference type="CDD" id="cd01837">
    <property type="entry name" value="SGNH_plant_lipase_like"/>
    <property type="match status" value="1"/>
</dbReference>
<dbReference type="Gene3D" id="3.40.50.1110">
    <property type="entry name" value="SGNH hydrolase"/>
    <property type="match status" value="1"/>
</dbReference>
<dbReference type="InterPro" id="IPR001087">
    <property type="entry name" value="GDSL"/>
</dbReference>
<dbReference type="InterPro" id="IPR051238">
    <property type="entry name" value="GDSL_esterase/lipase"/>
</dbReference>
<dbReference type="InterPro" id="IPR036514">
    <property type="entry name" value="SGNH_hydro_sf"/>
</dbReference>
<dbReference type="InterPro" id="IPR035669">
    <property type="entry name" value="SGNH_plant_lipase-like"/>
</dbReference>
<dbReference type="PANTHER" id="PTHR45650:SF21">
    <property type="entry name" value="GDSL ESTERASE_LIPASE"/>
    <property type="match status" value="1"/>
</dbReference>
<dbReference type="PANTHER" id="PTHR45650">
    <property type="entry name" value="GDSL-LIKE LIPASE/ACYLHYDROLASE-RELATED"/>
    <property type="match status" value="1"/>
</dbReference>
<dbReference type="Pfam" id="PF00657">
    <property type="entry name" value="Lipase_GDSL"/>
    <property type="match status" value="1"/>
</dbReference>
<dbReference type="SUPFAM" id="SSF52266">
    <property type="entry name" value="SGNH hydrolase"/>
    <property type="match status" value="1"/>
</dbReference>
<proteinExistence type="evidence at transcript level"/>
<feature type="signal peptide" evidence="2">
    <location>
        <begin position="1"/>
        <end position="25"/>
    </location>
</feature>
<feature type="chain" id="PRO_0000367378" description="GDSL esterase/lipase At2g19060">
    <location>
        <begin position="26"/>
        <end position="349"/>
    </location>
</feature>
<feature type="active site" description="Nucleophile" evidence="1">
    <location>
        <position position="37"/>
    </location>
</feature>
<feature type="active site" evidence="1">
    <location>
        <position position="317"/>
    </location>
</feature>
<feature type="active site" evidence="1">
    <location>
        <position position="320"/>
    </location>
</feature>
<feature type="glycosylation site" description="N-linked (GlcNAc...) asparagine" evidence="2">
    <location>
        <position position="178"/>
    </location>
</feature>
<feature type="sequence conflict" description="In Ref. 3; BX820375." evidence="3" ref="3">
    <original>M</original>
    <variation>V</variation>
    <location>
        <position position="5"/>
    </location>
</feature>
<keyword id="KW-0325">Glycoprotein</keyword>
<keyword id="KW-0378">Hydrolase</keyword>
<keyword id="KW-0442">Lipid degradation</keyword>
<keyword id="KW-0443">Lipid metabolism</keyword>
<keyword id="KW-1185">Reference proteome</keyword>
<keyword id="KW-0964">Secreted</keyword>
<keyword id="KW-0732">Signal</keyword>
<comment type="subcellular location">
    <subcellularLocation>
        <location evidence="3">Secreted</location>
    </subcellularLocation>
</comment>
<comment type="similarity">
    <text evidence="3">Belongs to the 'GDSL' lipolytic enzyme family.</text>
</comment>
<comment type="sequence caution" evidence="3">
    <conflict type="frameshift">
        <sequence resource="EMBL" id="BX820375"/>
    </conflict>
</comment>
<sequence length="349" mass="38724">MADKMFKALLWAFATAVVMAEAVRGQLVPCYFVFGDSVFDNGNNNELDTLAKVNYSPYGIDFARGPTGRFSNGRNIPDFIAEELRISYDIPPFTRASTEQAHTGINYASGGAGLLEETSQHLGERISFEKQITNHRKMIMTAGVPPEKLKKCLYTINIGSNDYLNNYFMPAPYTTNENFSFDEYADFLIQSYRSYLKSLYVLGARKVAVFGVSKLGCTPRMIASHGGGKGCATEVNKAVEPFNKKLKDLISEFNRISVVDHAKFTFVDLFSSQNPIEYFILGFTVTDKSCCTVESGQELCAANKPVCPNRERYVYWDNVHSTEAANKVVVKAAFAGLITSPISILLLVL</sequence>
<organism>
    <name type="scientific">Arabidopsis thaliana</name>
    <name type="common">Mouse-ear cress</name>
    <dbReference type="NCBI Taxonomy" id="3702"/>
    <lineage>
        <taxon>Eukaryota</taxon>
        <taxon>Viridiplantae</taxon>
        <taxon>Streptophyta</taxon>
        <taxon>Embryophyta</taxon>
        <taxon>Tracheophyta</taxon>
        <taxon>Spermatophyta</taxon>
        <taxon>Magnoliopsida</taxon>
        <taxon>eudicotyledons</taxon>
        <taxon>Gunneridae</taxon>
        <taxon>Pentapetalae</taxon>
        <taxon>rosids</taxon>
        <taxon>malvids</taxon>
        <taxon>Brassicales</taxon>
        <taxon>Brassicaceae</taxon>
        <taxon>Camelineae</taxon>
        <taxon>Arabidopsis</taxon>
    </lineage>
</organism>
<name>GDL37_ARATH</name>
<reference key="1">
    <citation type="journal article" date="1999" name="Nature">
        <title>Sequence and analysis of chromosome 2 of the plant Arabidopsis thaliana.</title>
        <authorList>
            <person name="Lin X."/>
            <person name="Kaul S."/>
            <person name="Rounsley S.D."/>
            <person name="Shea T.P."/>
            <person name="Benito M.-I."/>
            <person name="Town C.D."/>
            <person name="Fujii C.Y."/>
            <person name="Mason T.M."/>
            <person name="Bowman C.L."/>
            <person name="Barnstead M.E."/>
            <person name="Feldblyum T.V."/>
            <person name="Buell C.R."/>
            <person name="Ketchum K.A."/>
            <person name="Lee J.J."/>
            <person name="Ronning C.M."/>
            <person name="Koo H.L."/>
            <person name="Moffat K.S."/>
            <person name="Cronin L.A."/>
            <person name="Shen M."/>
            <person name="Pai G."/>
            <person name="Van Aken S."/>
            <person name="Umayam L."/>
            <person name="Tallon L.J."/>
            <person name="Gill J.E."/>
            <person name="Adams M.D."/>
            <person name="Carrera A.J."/>
            <person name="Creasy T.H."/>
            <person name="Goodman H.M."/>
            <person name="Somerville C.R."/>
            <person name="Copenhaver G.P."/>
            <person name="Preuss D."/>
            <person name="Nierman W.C."/>
            <person name="White O."/>
            <person name="Eisen J.A."/>
            <person name="Salzberg S.L."/>
            <person name="Fraser C.M."/>
            <person name="Venter J.C."/>
        </authorList>
    </citation>
    <scope>NUCLEOTIDE SEQUENCE [LARGE SCALE GENOMIC DNA]</scope>
    <source>
        <strain>cv. Columbia</strain>
    </source>
</reference>
<reference key="2">
    <citation type="journal article" date="2017" name="Plant J.">
        <title>Araport11: a complete reannotation of the Arabidopsis thaliana reference genome.</title>
        <authorList>
            <person name="Cheng C.Y."/>
            <person name="Krishnakumar V."/>
            <person name="Chan A.P."/>
            <person name="Thibaud-Nissen F."/>
            <person name="Schobel S."/>
            <person name="Town C.D."/>
        </authorList>
    </citation>
    <scope>GENOME REANNOTATION</scope>
    <source>
        <strain>cv. Columbia</strain>
    </source>
</reference>
<reference key="3">
    <citation type="journal article" date="2004" name="Genome Res.">
        <title>Whole genome sequence comparisons and 'full-length' cDNA sequences: a combined approach to evaluate and improve Arabidopsis genome annotation.</title>
        <authorList>
            <person name="Castelli V."/>
            <person name="Aury J.-M."/>
            <person name="Jaillon O."/>
            <person name="Wincker P."/>
            <person name="Clepet C."/>
            <person name="Menard M."/>
            <person name="Cruaud C."/>
            <person name="Quetier F."/>
            <person name="Scarpelli C."/>
            <person name="Schaechter V."/>
            <person name="Temple G."/>
            <person name="Caboche M."/>
            <person name="Weissenbach J."/>
            <person name="Salanoubat M."/>
        </authorList>
    </citation>
    <scope>NUCLEOTIDE SEQUENCE [LARGE SCALE MRNA]</scope>
    <source>
        <strain>cv. Columbia</strain>
    </source>
</reference>
<reference key="4">
    <citation type="journal article" date="2004" name="Prog. Lipid Res.">
        <title>GDSL family of serine esterases/lipases.</title>
        <authorList>
            <person name="Akoh C.C."/>
            <person name="Lee G.-C."/>
            <person name="Liaw Y.-C."/>
            <person name="Huang T.-H."/>
            <person name="Shaw J.-F."/>
        </authorList>
    </citation>
    <scope>REVIEW</scope>
</reference>
<reference key="5">
    <citation type="journal article" date="2008" name="Pak. J. Biol. Sci.">
        <title>Sequence analysis of GDSL lipase gene family in Arabidopsis thaliana.</title>
        <authorList>
            <person name="Ling H."/>
        </authorList>
    </citation>
    <scope>GENE FAMILY</scope>
</reference>
<protein>
    <recommendedName>
        <fullName>GDSL esterase/lipase At2g19060</fullName>
        <ecNumber>3.1.1.-</ecNumber>
    </recommendedName>
    <alternativeName>
        <fullName>Extracellular lipase At2g19060</fullName>
    </alternativeName>
</protein>
<evidence type="ECO:0000250" key="1"/>
<evidence type="ECO:0000255" key="2"/>
<evidence type="ECO:0000305" key="3"/>
<accession>O64469</accession>
<gene>
    <name type="ordered locus">At2g19060</name>
    <name type="ORF">T20K24.7</name>
</gene>